<comment type="function">
    <text evidence="1">Isomerase that catalyzes the conversion of deoxy-ribose 1-phosphate (dRib-1-P) and ribose 1-phosphate (Rib-1-P) to deoxy-ribose 5-phosphate (dRib-5-P) and ribose 5-phosphate (Rib-5-P), respectively.</text>
</comment>
<comment type="catalytic activity">
    <reaction evidence="1">
        <text>2-deoxy-alpha-D-ribose 1-phosphate = 2-deoxy-D-ribose 5-phosphate</text>
        <dbReference type="Rhea" id="RHEA:27658"/>
        <dbReference type="ChEBI" id="CHEBI:57259"/>
        <dbReference type="ChEBI" id="CHEBI:62877"/>
        <dbReference type="EC" id="5.4.2.7"/>
    </reaction>
</comment>
<comment type="catalytic activity">
    <reaction evidence="1">
        <text>alpha-D-ribose 1-phosphate = D-ribose 5-phosphate</text>
        <dbReference type="Rhea" id="RHEA:18793"/>
        <dbReference type="ChEBI" id="CHEBI:57720"/>
        <dbReference type="ChEBI" id="CHEBI:78346"/>
        <dbReference type="EC" id="5.4.2.7"/>
    </reaction>
</comment>
<comment type="cofactor">
    <cofactor evidence="1">
        <name>Mn(2+)</name>
        <dbReference type="ChEBI" id="CHEBI:29035"/>
    </cofactor>
    <text evidence="1">Binds 2 manganese ions.</text>
</comment>
<comment type="pathway">
    <text evidence="1">Carbohydrate degradation; 2-deoxy-D-ribose 1-phosphate degradation; D-glyceraldehyde 3-phosphate and acetaldehyde from 2-deoxy-alpha-D-ribose 1-phosphate: step 1/2.</text>
</comment>
<comment type="subcellular location">
    <subcellularLocation>
        <location evidence="1">Cytoplasm</location>
    </subcellularLocation>
</comment>
<comment type="similarity">
    <text evidence="1">Belongs to the phosphopentomutase family.</text>
</comment>
<gene>
    <name evidence="1" type="primary">deoB</name>
    <name type="ordered locus">SP70585_0865</name>
</gene>
<protein>
    <recommendedName>
        <fullName evidence="1">Phosphopentomutase</fullName>
        <ecNumber evidence="1">5.4.2.7</ecNumber>
    </recommendedName>
    <alternativeName>
        <fullName evidence="1">Phosphodeoxyribomutase</fullName>
    </alternativeName>
</protein>
<keyword id="KW-0963">Cytoplasm</keyword>
<keyword id="KW-0413">Isomerase</keyword>
<keyword id="KW-0464">Manganese</keyword>
<keyword id="KW-0479">Metal-binding</keyword>
<accession>C1C6G4</accession>
<feature type="chain" id="PRO_1000148253" description="Phosphopentomutase">
    <location>
        <begin position="1"/>
        <end position="403"/>
    </location>
</feature>
<feature type="binding site" evidence="1">
    <location>
        <position position="13"/>
    </location>
    <ligand>
        <name>Mn(2+)</name>
        <dbReference type="ChEBI" id="CHEBI:29035"/>
        <label>1</label>
    </ligand>
</feature>
<feature type="binding site" evidence="1">
    <location>
        <position position="298"/>
    </location>
    <ligand>
        <name>Mn(2+)</name>
        <dbReference type="ChEBI" id="CHEBI:29035"/>
        <label>2</label>
    </ligand>
</feature>
<feature type="binding site" evidence="1">
    <location>
        <position position="303"/>
    </location>
    <ligand>
        <name>Mn(2+)</name>
        <dbReference type="ChEBI" id="CHEBI:29035"/>
        <label>2</label>
    </ligand>
</feature>
<feature type="binding site" evidence="1">
    <location>
        <position position="339"/>
    </location>
    <ligand>
        <name>Mn(2+)</name>
        <dbReference type="ChEBI" id="CHEBI:29035"/>
        <label>1</label>
    </ligand>
</feature>
<feature type="binding site" evidence="1">
    <location>
        <position position="340"/>
    </location>
    <ligand>
        <name>Mn(2+)</name>
        <dbReference type="ChEBI" id="CHEBI:29035"/>
        <label>1</label>
    </ligand>
</feature>
<feature type="binding site" evidence="1">
    <location>
        <position position="351"/>
    </location>
    <ligand>
        <name>Mn(2+)</name>
        <dbReference type="ChEBI" id="CHEBI:29035"/>
        <label>2</label>
    </ligand>
</feature>
<dbReference type="EC" id="5.4.2.7" evidence="1"/>
<dbReference type="EMBL" id="CP000918">
    <property type="protein sequence ID" value="ACO17100.1"/>
    <property type="molecule type" value="Genomic_DNA"/>
</dbReference>
<dbReference type="RefSeq" id="WP_000033102.1">
    <property type="nucleotide sequence ID" value="NC_012468.1"/>
</dbReference>
<dbReference type="SMR" id="C1C6G4"/>
<dbReference type="KEGG" id="snm:SP70585_0865"/>
<dbReference type="HOGENOM" id="CLU_053861_0_0_9"/>
<dbReference type="UniPathway" id="UPA00002">
    <property type="reaction ID" value="UER00467"/>
</dbReference>
<dbReference type="Proteomes" id="UP000002211">
    <property type="component" value="Chromosome"/>
</dbReference>
<dbReference type="GO" id="GO:0005829">
    <property type="term" value="C:cytosol"/>
    <property type="evidence" value="ECO:0007669"/>
    <property type="project" value="TreeGrafter"/>
</dbReference>
<dbReference type="GO" id="GO:0000287">
    <property type="term" value="F:magnesium ion binding"/>
    <property type="evidence" value="ECO:0007669"/>
    <property type="project" value="InterPro"/>
</dbReference>
<dbReference type="GO" id="GO:0030145">
    <property type="term" value="F:manganese ion binding"/>
    <property type="evidence" value="ECO:0007669"/>
    <property type="project" value="UniProtKB-UniRule"/>
</dbReference>
<dbReference type="GO" id="GO:0008973">
    <property type="term" value="F:phosphopentomutase activity"/>
    <property type="evidence" value="ECO:0007669"/>
    <property type="project" value="UniProtKB-UniRule"/>
</dbReference>
<dbReference type="GO" id="GO:0006018">
    <property type="term" value="P:2-deoxyribose 1-phosphate catabolic process"/>
    <property type="evidence" value="ECO:0007669"/>
    <property type="project" value="UniProtKB-UniRule"/>
</dbReference>
<dbReference type="GO" id="GO:0006015">
    <property type="term" value="P:5-phosphoribose 1-diphosphate biosynthetic process"/>
    <property type="evidence" value="ECO:0007669"/>
    <property type="project" value="UniProtKB-UniPathway"/>
</dbReference>
<dbReference type="GO" id="GO:0043094">
    <property type="term" value="P:metabolic compound salvage"/>
    <property type="evidence" value="ECO:0007669"/>
    <property type="project" value="InterPro"/>
</dbReference>
<dbReference type="GO" id="GO:0009117">
    <property type="term" value="P:nucleotide metabolic process"/>
    <property type="evidence" value="ECO:0007669"/>
    <property type="project" value="InterPro"/>
</dbReference>
<dbReference type="CDD" id="cd16009">
    <property type="entry name" value="PPM"/>
    <property type="match status" value="1"/>
</dbReference>
<dbReference type="FunFam" id="3.30.70.1250:FF:000001">
    <property type="entry name" value="Phosphopentomutase"/>
    <property type="match status" value="1"/>
</dbReference>
<dbReference type="Gene3D" id="3.40.720.10">
    <property type="entry name" value="Alkaline Phosphatase, subunit A"/>
    <property type="match status" value="1"/>
</dbReference>
<dbReference type="Gene3D" id="3.30.70.1250">
    <property type="entry name" value="Phosphopentomutase"/>
    <property type="match status" value="1"/>
</dbReference>
<dbReference type="HAMAP" id="MF_00740">
    <property type="entry name" value="Phosphopentomut"/>
    <property type="match status" value="1"/>
</dbReference>
<dbReference type="InterPro" id="IPR017850">
    <property type="entry name" value="Alkaline_phosphatase_core_sf"/>
</dbReference>
<dbReference type="InterPro" id="IPR010045">
    <property type="entry name" value="DeoB"/>
</dbReference>
<dbReference type="InterPro" id="IPR006124">
    <property type="entry name" value="Metalloenzyme"/>
</dbReference>
<dbReference type="InterPro" id="IPR024052">
    <property type="entry name" value="Phosphopentomutase_DeoB_cap_sf"/>
</dbReference>
<dbReference type="NCBIfam" id="TIGR01696">
    <property type="entry name" value="deoB"/>
    <property type="match status" value="1"/>
</dbReference>
<dbReference type="NCBIfam" id="NF003766">
    <property type="entry name" value="PRK05362.1"/>
    <property type="match status" value="1"/>
</dbReference>
<dbReference type="PANTHER" id="PTHR21110">
    <property type="entry name" value="PHOSPHOPENTOMUTASE"/>
    <property type="match status" value="1"/>
</dbReference>
<dbReference type="PANTHER" id="PTHR21110:SF0">
    <property type="entry name" value="PHOSPHOPENTOMUTASE"/>
    <property type="match status" value="1"/>
</dbReference>
<dbReference type="Pfam" id="PF01676">
    <property type="entry name" value="Metalloenzyme"/>
    <property type="match status" value="1"/>
</dbReference>
<dbReference type="PIRSF" id="PIRSF001491">
    <property type="entry name" value="Ppentomutase"/>
    <property type="match status" value="1"/>
</dbReference>
<dbReference type="SUPFAM" id="SSF53649">
    <property type="entry name" value="Alkaline phosphatase-like"/>
    <property type="match status" value="1"/>
</dbReference>
<dbReference type="SUPFAM" id="SSF143856">
    <property type="entry name" value="DeoB insert domain-like"/>
    <property type="match status" value="1"/>
</dbReference>
<sequence length="403" mass="44077">MSKFNRIHLVVLDSVGIGAAPDANNFVNAGVPDGASDTLGHISKTVGLNVPNMAKIGLGNIPRETPLKTVAAESNPTGYATKLEEVSLGKDTMTGHWEIMGLNITEPFDTFWNGFPEEILTKIEEFSGRKVIREANKPYSGTAVIDDFGPRQMETGELIIYTSADPVLQIAAHEDIIPLDELYRICEYARSITLERPALLGRIIARPYVGEPGNFTRTANRRDLAVSPFSPTVLDKLNEAGIDTYAVGKINDIFNGAGINHDMGHNKSNSHGIDTLLKTMGLAEFEKGFSFTNLVDFDALYGHRRNAHGYRDCLHEFDERLPEIIAAMRENDLLLITADHGNDPTYAGTDHTREYIPLLAYSPAFKGNGLIPVGHFADISATVADNFGVETAMIGESFLDKLV</sequence>
<organism>
    <name type="scientific">Streptococcus pneumoniae (strain 70585)</name>
    <dbReference type="NCBI Taxonomy" id="488221"/>
    <lineage>
        <taxon>Bacteria</taxon>
        <taxon>Bacillati</taxon>
        <taxon>Bacillota</taxon>
        <taxon>Bacilli</taxon>
        <taxon>Lactobacillales</taxon>
        <taxon>Streptococcaceae</taxon>
        <taxon>Streptococcus</taxon>
    </lineage>
</organism>
<name>DEOB_STRP7</name>
<evidence type="ECO:0000255" key="1">
    <source>
        <dbReference type="HAMAP-Rule" id="MF_00740"/>
    </source>
</evidence>
<proteinExistence type="inferred from homology"/>
<reference key="1">
    <citation type="journal article" date="2010" name="Genome Biol.">
        <title>Structure and dynamics of the pan-genome of Streptococcus pneumoniae and closely related species.</title>
        <authorList>
            <person name="Donati C."/>
            <person name="Hiller N.L."/>
            <person name="Tettelin H."/>
            <person name="Muzzi A."/>
            <person name="Croucher N.J."/>
            <person name="Angiuoli S.V."/>
            <person name="Oggioni M."/>
            <person name="Dunning Hotopp J.C."/>
            <person name="Hu F.Z."/>
            <person name="Riley D.R."/>
            <person name="Covacci A."/>
            <person name="Mitchell T.J."/>
            <person name="Bentley S.D."/>
            <person name="Kilian M."/>
            <person name="Ehrlich G.D."/>
            <person name="Rappuoli R."/>
            <person name="Moxon E.R."/>
            <person name="Masignani V."/>
        </authorList>
    </citation>
    <scope>NUCLEOTIDE SEQUENCE [LARGE SCALE GENOMIC DNA]</scope>
    <source>
        <strain>70585</strain>
    </source>
</reference>